<name>SELD_CAMJR</name>
<feature type="chain" id="PRO_1000051595" description="Selenide, water dikinase">
    <location>
        <begin position="1"/>
        <end position="340"/>
    </location>
</feature>
<feature type="active site" evidence="2">
    <location>
        <position position="17"/>
    </location>
</feature>
<feature type="binding site" description="in other chain" evidence="2">
    <location>
        <position position="20"/>
    </location>
    <ligand>
        <name>ATP</name>
        <dbReference type="ChEBI" id="CHEBI:30616"/>
        <note>ligand shared between dimeric partners</note>
    </ligand>
</feature>
<feature type="binding site" description="in other chain" evidence="2">
    <location>
        <begin position="45"/>
        <end position="47"/>
    </location>
    <ligand>
        <name>ATP</name>
        <dbReference type="ChEBI" id="CHEBI:30616"/>
        <note>ligand shared between dimeric partners</note>
    </ligand>
</feature>
<feature type="binding site" evidence="2">
    <location>
        <position position="48"/>
    </location>
    <ligand>
        <name>Mg(2+)</name>
        <dbReference type="ChEBI" id="CHEBI:18420"/>
    </ligand>
</feature>
<feature type="binding site" description="in other chain" evidence="2">
    <location>
        <position position="65"/>
    </location>
    <ligand>
        <name>ATP</name>
        <dbReference type="ChEBI" id="CHEBI:30616"/>
        <note>ligand shared between dimeric partners</note>
    </ligand>
</feature>
<feature type="binding site" description="in other chain" evidence="2">
    <location>
        <position position="88"/>
    </location>
    <ligand>
        <name>ATP</name>
        <dbReference type="ChEBI" id="CHEBI:30616"/>
        <note>ligand shared between dimeric partners</note>
    </ligand>
</feature>
<feature type="binding site" evidence="2">
    <location>
        <position position="88"/>
    </location>
    <ligand>
        <name>Mg(2+)</name>
        <dbReference type="ChEBI" id="CHEBI:18420"/>
    </ligand>
</feature>
<feature type="binding site" evidence="2">
    <location>
        <begin position="136"/>
        <end position="138"/>
    </location>
    <ligand>
        <name>ATP</name>
        <dbReference type="ChEBI" id="CHEBI:30616"/>
        <note>ligand shared between dimeric partners</note>
    </ligand>
</feature>
<feature type="binding site" evidence="2">
    <location>
        <position position="224"/>
    </location>
    <ligand>
        <name>Mg(2+)</name>
        <dbReference type="ChEBI" id="CHEBI:18420"/>
    </ligand>
</feature>
<feature type="site" description="Important for catalytic activity" evidence="2">
    <location>
        <position position="20"/>
    </location>
</feature>
<feature type="non-standard amino acid" description="Selenocysteine" evidence="1">
    <location>
        <position position="17"/>
    </location>
</feature>
<keyword id="KW-0067">ATP-binding</keyword>
<keyword id="KW-0418">Kinase</keyword>
<keyword id="KW-0460">Magnesium</keyword>
<keyword id="KW-0479">Metal-binding</keyword>
<keyword id="KW-0547">Nucleotide-binding</keyword>
<keyword id="KW-0711">Selenium</keyword>
<keyword id="KW-0712">Selenocysteine</keyword>
<keyword id="KW-0808">Transferase</keyword>
<accession>Q5HSS7</accession>
<protein>
    <recommendedName>
        <fullName evidence="2">Selenide, water dikinase</fullName>
        <ecNumber evidence="2">2.7.9.3</ecNumber>
    </recommendedName>
    <alternativeName>
        <fullName evidence="2">Selenium donor protein</fullName>
    </alternativeName>
    <alternativeName>
        <fullName evidence="2">Selenophosphate synthase</fullName>
    </alternativeName>
</protein>
<reference key="1">
    <citation type="journal article" date="2005" name="PLoS Biol.">
        <title>Major structural differences and novel potential virulence mechanisms from the genomes of multiple Campylobacter species.</title>
        <authorList>
            <person name="Fouts D.E."/>
            <person name="Mongodin E.F."/>
            <person name="Mandrell R.E."/>
            <person name="Miller W.G."/>
            <person name="Rasko D.A."/>
            <person name="Ravel J."/>
            <person name="Brinkac L.M."/>
            <person name="DeBoy R.T."/>
            <person name="Parker C.T."/>
            <person name="Daugherty S.C."/>
            <person name="Dodson R.J."/>
            <person name="Durkin A.S."/>
            <person name="Madupu R."/>
            <person name="Sullivan S.A."/>
            <person name="Shetty J.U."/>
            <person name="Ayodeji M.A."/>
            <person name="Shvartsbeyn A."/>
            <person name="Schatz M.C."/>
            <person name="Badger J.H."/>
            <person name="Fraser C.M."/>
            <person name="Nelson K.E."/>
        </authorList>
    </citation>
    <scope>NUCLEOTIDE SEQUENCE [LARGE SCALE GENOMIC DNA]</scope>
    <source>
        <strain>RM1221</strain>
    </source>
</reference>
<gene>
    <name evidence="2" type="primary">selD</name>
    <name type="ordered locus">CJE1677</name>
</gene>
<organism>
    <name type="scientific">Campylobacter jejuni (strain RM1221)</name>
    <dbReference type="NCBI Taxonomy" id="195099"/>
    <lineage>
        <taxon>Bacteria</taxon>
        <taxon>Pseudomonadati</taxon>
        <taxon>Campylobacterota</taxon>
        <taxon>Epsilonproteobacteria</taxon>
        <taxon>Campylobacterales</taxon>
        <taxon>Campylobacteraceae</taxon>
        <taxon>Campylobacter</taxon>
    </lineage>
</organism>
<proteinExistence type="inferred from homology"/>
<dbReference type="EC" id="2.7.9.3" evidence="2"/>
<dbReference type="EMBL" id="CP000025">
    <property type="protein sequence ID" value="AAW36110.1"/>
    <property type="molecule type" value="Genomic_DNA"/>
</dbReference>
<dbReference type="KEGG" id="cjr:CJE1677"/>
<dbReference type="HOGENOM" id="CLU_032859_0_1_7"/>
<dbReference type="GO" id="GO:0005737">
    <property type="term" value="C:cytoplasm"/>
    <property type="evidence" value="ECO:0007669"/>
    <property type="project" value="TreeGrafter"/>
</dbReference>
<dbReference type="GO" id="GO:0005524">
    <property type="term" value="F:ATP binding"/>
    <property type="evidence" value="ECO:0007669"/>
    <property type="project" value="UniProtKB-UniRule"/>
</dbReference>
<dbReference type="GO" id="GO:0000287">
    <property type="term" value="F:magnesium ion binding"/>
    <property type="evidence" value="ECO:0007669"/>
    <property type="project" value="UniProtKB-UniRule"/>
</dbReference>
<dbReference type="GO" id="GO:0004756">
    <property type="term" value="F:selenide, water dikinase activity"/>
    <property type="evidence" value="ECO:0007669"/>
    <property type="project" value="UniProtKB-UniRule"/>
</dbReference>
<dbReference type="GO" id="GO:0016260">
    <property type="term" value="P:selenocysteine biosynthetic process"/>
    <property type="evidence" value="ECO:0007669"/>
    <property type="project" value="InterPro"/>
</dbReference>
<dbReference type="CDD" id="cd02195">
    <property type="entry name" value="SelD"/>
    <property type="match status" value="1"/>
</dbReference>
<dbReference type="Gene3D" id="3.90.650.10">
    <property type="entry name" value="PurM-like C-terminal domain"/>
    <property type="match status" value="1"/>
</dbReference>
<dbReference type="Gene3D" id="3.30.1330.10">
    <property type="entry name" value="PurM-like, N-terminal domain"/>
    <property type="match status" value="1"/>
</dbReference>
<dbReference type="HAMAP" id="MF_00625">
    <property type="entry name" value="SelD"/>
    <property type="match status" value="1"/>
</dbReference>
<dbReference type="InterPro" id="IPR010918">
    <property type="entry name" value="PurM-like_C_dom"/>
</dbReference>
<dbReference type="InterPro" id="IPR036676">
    <property type="entry name" value="PurM-like_C_sf"/>
</dbReference>
<dbReference type="InterPro" id="IPR016188">
    <property type="entry name" value="PurM-like_N"/>
</dbReference>
<dbReference type="InterPro" id="IPR036921">
    <property type="entry name" value="PurM-like_N_sf"/>
</dbReference>
<dbReference type="InterPro" id="IPR023061">
    <property type="entry name" value="SelD_I"/>
</dbReference>
<dbReference type="InterPro" id="IPR004536">
    <property type="entry name" value="SPS/SelD"/>
</dbReference>
<dbReference type="NCBIfam" id="TIGR00476">
    <property type="entry name" value="selD"/>
    <property type="match status" value="1"/>
</dbReference>
<dbReference type="PANTHER" id="PTHR10256:SF0">
    <property type="entry name" value="INACTIVE SELENIDE, WATER DIKINASE-LIKE PROTEIN-RELATED"/>
    <property type="match status" value="1"/>
</dbReference>
<dbReference type="PANTHER" id="PTHR10256">
    <property type="entry name" value="SELENIDE, WATER DIKINASE"/>
    <property type="match status" value="1"/>
</dbReference>
<dbReference type="Pfam" id="PF00586">
    <property type="entry name" value="AIRS"/>
    <property type="match status" value="1"/>
</dbReference>
<dbReference type="Pfam" id="PF02769">
    <property type="entry name" value="AIRS_C"/>
    <property type="match status" value="1"/>
</dbReference>
<dbReference type="PIRSF" id="PIRSF036407">
    <property type="entry name" value="Selenphspht_syn"/>
    <property type="match status" value="1"/>
</dbReference>
<dbReference type="SUPFAM" id="SSF56042">
    <property type="entry name" value="PurM C-terminal domain-like"/>
    <property type="match status" value="1"/>
</dbReference>
<dbReference type="SUPFAM" id="SSF55326">
    <property type="entry name" value="PurM N-terminal domain-like"/>
    <property type="match status" value="1"/>
</dbReference>
<evidence type="ECO:0000255" key="1"/>
<evidence type="ECO:0000255" key="2">
    <source>
        <dbReference type="HAMAP-Rule" id="MF_00625"/>
    </source>
</evidence>
<comment type="function">
    <text evidence="2">Synthesizes selenophosphate from selenide and ATP.</text>
</comment>
<comment type="catalytic activity">
    <reaction evidence="2">
        <text>hydrogenselenide + ATP + H2O = selenophosphate + AMP + phosphate + 2 H(+)</text>
        <dbReference type="Rhea" id="RHEA:18737"/>
        <dbReference type="ChEBI" id="CHEBI:15377"/>
        <dbReference type="ChEBI" id="CHEBI:15378"/>
        <dbReference type="ChEBI" id="CHEBI:16144"/>
        <dbReference type="ChEBI" id="CHEBI:29317"/>
        <dbReference type="ChEBI" id="CHEBI:30616"/>
        <dbReference type="ChEBI" id="CHEBI:43474"/>
        <dbReference type="ChEBI" id="CHEBI:456215"/>
        <dbReference type="EC" id="2.7.9.3"/>
    </reaction>
</comment>
<comment type="cofactor">
    <cofactor evidence="2">
        <name>Mg(2+)</name>
        <dbReference type="ChEBI" id="CHEBI:18420"/>
    </cofactor>
    <text evidence="2">Binds 1 Mg(2+) ion per monomer.</text>
</comment>
<comment type="subunit">
    <text evidence="2">Homodimer.</text>
</comment>
<comment type="similarity">
    <text evidence="2">Belongs to the selenophosphate synthase 1 family. Class I subfamily.</text>
</comment>
<sequence length="340" mass="37194">MQYKNQNLTHFVKAAGUAAKLSPGGLKTILNFMQKTPALLSDIGNNEDASVYQISRDLALVQTLDFITPIVDSAYHFGAIAAANALSDVFAMGAEVINALNIVGFDTCNHDVNILKELLEGANDKVQECNALVVGGHTIESTELFFGLSVTGKVHPSKFIANNTSKIGDCIILTKPLGTGILSTALKAQMLNQKHLDIMLKNMMELNYKASQIALKFHPSAMSDVTGFGLLGHLKEMLNKNISFEIFQNEILFLEGAKEYFNMGLIPAGAYKNLEFIKELIPDLNEEKLLLCDPQTSGGLLISISEKESLECLKKLEDENIQAKIIAKVVNKQENDIIIS</sequence>